<feature type="chain" id="PRO_0000224462" description="Valine--tRNA ligase">
    <location>
        <begin position="1"/>
        <end position="880"/>
    </location>
</feature>
<feature type="coiled-coil region" evidence="1">
    <location>
        <begin position="810"/>
        <end position="845"/>
    </location>
</feature>
<feature type="short sequence motif" description="'HIGH' region">
    <location>
        <begin position="47"/>
        <end position="57"/>
    </location>
</feature>
<feature type="short sequence motif" description="'KMSKS' region">
    <location>
        <begin position="526"/>
        <end position="530"/>
    </location>
</feature>
<feature type="binding site" evidence="1">
    <location>
        <position position="529"/>
    </location>
    <ligand>
        <name>ATP</name>
        <dbReference type="ChEBI" id="CHEBI:30616"/>
    </ligand>
</feature>
<gene>
    <name evidence="1" type="primary">valS</name>
    <name type="ordered locus">CPE1919</name>
</gene>
<name>SYV_CLOPE</name>
<dbReference type="EC" id="6.1.1.9" evidence="1"/>
<dbReference type="EMBL" id="BA000016">
    <property type="protein sequence ID" value="BAB81625.1"/>
    <property type="molecule type" value="Genomic_DNA"/>
</dbReference>
<dbReference type="RefSeq" id="WP_011010681.1">
    <property type="nucleotide sequence ID" value="NC_003366.1"/>
</dbReference>
<dbReference type="SMR" id="Q8XJ42"/>
<dbReference type="STRING" id="195102.gene:10491188"/>
<dbReference type="KEGG" id="cpe:CPE1919"/>
<dbReference type="HOGENOM" id="CLU_001493_0_2_9"/>
<dbReference type="Proteomes" id="UP000000818">
    <property type="component" value="Chromosome"/>
</dbReference>
<dbReference type="GO" id="GO:0005829">
    <property type="term" value="C:cytosol"/>
    <property type="evidence" value="ECO:0007669"/>
    <property type="project" value="TreeGrafter"/>
</dbReference>
<dbReference type="GO" id="GO:0002161">
    <property type="term" value="F:aminoacyl-tRNA deacylase activity"/>
    <property type="evidence" value="ECO:0007669"/>
    <property type="project" value="InterPro"/>
</dbReference>
<dbReference type="GO" id="GO:0005524">
    <property type="term" value="F:ATP binding"/>
    <property type="evidence" value="ECO:0007669"/>
    <property type="project" value="UniProtKB-UniRule"/>
</dbReference>
<dbReference type="GO" id="GO:0004832">
    <property type="term" value="F:valine-tRNA ligase activity"/>
    <property type="evidence" value="ECO:0007669"/>
    <property type="project" value="UniProtKB-UniRule"/>
</dbReference>
<dbReference type="GO" id="GO:0006438">
    <property type="term" value="P:valyl-tRNA aminoacylation"/>
    <property type="evidence" value="ECO:0007669"/>
    <property type="project" value="UniProtKB-UniRule"/>
</dbReference>
<dbReference type="CDD" id="cd07962">
    <property type="entry name" value="Anticodon_Ia_Val"/>
    <property type="match status" value="1"/>
</dbReference>
<dbReference type="CDD" id="cd00817">
    <property type="entry name" value="ValRS_core"/>
    <property type="match status" value="1"/>
</dbReference>
<dbReference type="FunFam" id="1.10.287.380:FF:000001">
    <property type="entry name" value="Valine--tRNA ligase"/>
    <property type="match status" value="1"/>
</dbReference>
<dbReference type="FunFam" id="1.10.730.10:FF:000014">
    <property type="entry name" value="Valine--tRNA ligase"/>
    <property type="match status" value="1"/>
</dbReference>
<dbReference type="FunFam" id="3.40.50.620:FF:000032">
    <property type="entry name" value="Valine--tRNA ligase"/>
    <property type="match status" value="1"/>
</dbReference>
<dbReference type="FunFam" id="3.40.50.620:FF:000098">
    <property type="entry name" value="Valine--tRNA ligase"/>
    <property type="match status" value="1"/>
</dbReference>
<dbReference type="Gene3D" id="3.40.50.620">
    <property type="entry name" value="HUPs"/>
    <property type="match status" value="2"/>
</dbReference>
<dbReference type="Gene3D" id="1.10.730.10">
    <property type="entry name" value="Isoleucyl-tRNA Synthetase, Domain 1"/>
    <property type="match status" value="1"/>
</dbReference>
<dbReference type="Gene3D" id="1.10.287.380">
    <property type="entry name" value="Valyl-tRNA synthetase, C-terminal domain"/>
    <property type="match status" value="1"/>
</dbReference>
<dbReference type="HAMAP" id="MF_02004">
    <property type="entry name" value="Val_tRNA_synth_type1"/>
    <property type="match status" value="1"/>
</dbReference>
<dbReference type="InterPro" id="IPR001412">
    <property type="entry name" value="aa-tRNA-synth_I_CS"/>
</dbReference>
<dbReference type="InterPro" id="IPR002300">
    <property type="entry name" value="aa-tRNA-synth_Ia"/>
</dbReference>
<dbReference type="InterPro" id="IPR033705">
    <property type="entry name" value="Anticodon_Ia_Val"/>
</dbReference>
<dbReference type="InterPro" id="IPR013155">
    <property type="entry name" value="M/V/L/I-tRNA-synth_anticd-bd"/>
</dbReference>
<dbReference type="InterPro" id="IPR014729">
    <property type="entry name" value="Rossmann-like_a/b/a_fold"/>
</dbReference>
<dbReference type="InterPro" id="IPR010978">
    <property type="entry name" value="tRNA-bd_arm"/>
</dbReference>
<dbReference type="InterPro" id="IPR009080">
    <property type="entry name" value="tRNAsynth_Ia_anticodon-bd"/>
</dbReference>
<dbReference type="InterPro" id="IPR037118">
    <property type="entry name" value="Val-tRNA_synth_C_sf"/>
</dbReference>
<dbReference type="InterPro" id="IPR019499">
    <property type="entry name" value="Val-tRNA_synth_tRNA-bd"/>
</dbReference>
<dbReference type="InterPro" id="IPR009008">
    <property type="entry name" value="Val/Leu/Ile-tRNA-synth_edit"/>
</dbReference>
<dbReference type="InterPro" id="IPR002303">
    <property type="entry name" value="Valyl-tRNA_ligase"/>
</dbReference>
<dbReference type="NCBIfam" id="NF004349">
    <property type="entry name" value="PRK05729.1"/>
    <property type="match status" value="1"/>
</dbReference>
<dbReference type="NCBIfam" id="TIGR00422">
    <property type="entry name" value="valS"/>
    <property type="match status" value="1"/>
</dbReference>
<dbReference type="PANTHER" id="PTHR11946:SF93">
    <property type="entry name" value="VALINE--TRNA LIGASE, CHLOROPLASTIC_MITOCHONDRIAL 2"/>
    <property type="match status" value="1"/>
</dbReference>
<dbReference type="PANTHER" id="PTHR11946">
    <property type="entry name" value="VALYL-TRNA SYNTHETASES"/>
    <property type="match status" value="1"/>
</dbReference>
<dbReference type="Pfam" id="PF08264">
    <property type="entry name" value="Anticodon_1"/>
    <property type="match status" value="1"/>
</dbReference>
<dbReference type="Pfam" id="PF00133">
    <property type="entry name" value="tRNA-synt_1"/>
    <property type="match status" value="1"/>
</dbReference>
<dbReference type="Pfam" id="PF10458">
    <property type="entry name" value="Val_tRNA-synt_C"/>
    <property type="match status" value="1"/>
</dbReference>
<dbReference type="PRINTS" id="PR00986">
    <property type="entry name" value="TRNASYNTHVAL"/>
</dbReference>
<dbReference type="SUPFAM" id="SSF47323">
    <property type="entry name" value="Anticodon-binding domain of a subclass of class I aminoacyl-tRNA synthetases"/>
    <property type="match status" value="1"/>
</dbReference>
<dbReference type="SUPFAM" id="SSF52374">
    <property type="entry name" value="Nucleotidylyl transferase"/>
    <property type="match status" value="1"/>
</dbReference>
<dbReference type="SUPFAM" id="SSF46589">
    <property type="entry name" value="tRNA-binding arm"/>
    <property type="match status" value="1"/>
</dbReference>
<dbReference type="SUPFAM" id="SSF50677">
    <property type="entry name" value="ValRS/IleRS/LeuRS editing domain"/>
    <property type="match status" value="1"/>
</dbReference>
<dbReference type="PROSITE" id="PS00178">
    <property type="entry name" value="AA_TRNA_LIGASE_I"/>
    <property type="match status" value="1"/>
</dbReference>
<comment type="function">
    <text evidence="1">Catalyzes the attachment of valine to tRNA(Val). As ValRS can inadvertently accommodate and process structurally similar amino acids such as threonine, to avoid such errors, it has a 'posttransfer' editing activity that hydrolyzes mischarged Thr-tRNA(Val) in a tRNA-dependent manner.</text>
</comment>
<comment type="catalytic activity">
    <reaction evidence="1">
        <text>tRNA(Val) + L-valine + ATP = L-valyl-tRNA(Val) + AMP + diphosphate</text>
        <dbReference type="Rhea" id="RHEA:10704"/>
        <dbReference type="Rhea" id="RHEA-COMP:9672"/>
        <dbReference type="Rhea" id="RHEA-COMP:9708"/>
        <dbReference type="ChEBI" id="CHEBI:30616"/>
        <dbReference type="ChEBI" id="CHEBI:33019"/>
        <dbReference type="ChEBI" id="CHEBI:57762"/>
        <dbReference type="ChEBI" id="CHEBI:78442"/>
        <dbReference type="ChEBI" id="CHEBI:78537"/>
        <dbReference type="ChEBI" id="CHEBI:456215"/>
        <dbReference type="EC" id="6.1.1.9"/>
    </reaction>
</comment>
<comment type="subunit">
    <text evidence="1">Monomer.</text>
</comment>
<comment type="subcellular location">
    <subcellularLocation>
        <location evidence="1">Cytoplasm</location>
    </subcellularLocation>
</comment>
<comment type="domain">
    <text evidence="1">ValRS has two distinct active sites: one for aminoacylation and one for editing. The misactivated threonine is translocated from the active site to the editing site.</text>
</comment>
<comment type="domain">
    <text evidence="1">The C-terminal coiled-coil domain is crucial for aminoacylation activity.</text>
</comment>
<comment type="similarity">
    <text evidence="1">Belongs to the class-I aminoacyl-tRNA synthetase family. ValS type 1 subfamily.</text>
</comment>
<keyword id="KW-0030">Aminoacyl-tRNA synthetase</keyword>
<keyword id="KW-0067">ATP-binding</keyword>
<keyword id="KW-0175">Coiled coil</keyword>
<keyword id="KW-0963">Cytoplasm</keyword>
<keyword id="KW-0436">Ligase</keyword>
<keyword id="KW-0547">Nucleotide-binding</keyword>
<keyword id="KW-0648">Protein biosynthesis</keyword>
<keyword id="KW-1185">Reference proteome</keyword>
<accession>Q8XJ42</accession>
<sequence>MDNKNISTTYNPKEFEERLYSNWQEKKYFTPVIDKSKKPYTIIMPPPNITGKLHLGHALDNTLQDMLIRFKRMQGYCTLWLPGQDHASIATEVKVENELLKEGLYKKEMGREAFLEKVWEWTDEYRERIREQLKKMGCSADFTREAFTMDENLSKAVRHVFVKLYKEGLIYQGNRITNWCPKCQTALSDAEIEYEEKEGNFWHIKYPVVGSEEFLEIATTRPETLLGDSAVAVNPSDERYAHLVGKMLKLPLTDREIPVIADDYVDVEFGTGAVKITPAHDPNDFEVGKRHNLPQIRVMDDSGVINHLGGKYKGLDRYEARKQMVADLEELGLLVKIKPHTHNVGTHDRCGTVVEPIISKQWYVKMQSLADPAIEVVRNKGTKFVPERFEKTYFNWMENIQDWCISRQLWWGHRIPVFYCKDCGEIMVELEDPTKCCKCGSENIEQDKDVLDTWFSSALWPFSTLGWPDRTDDLEFFYPTSTLVTGYDIIFFWVARMIFSGIHNMGETPFDTVLIHGIIRDAQGRKMSKSLGNGVDPLEVIDEYGADALRFMLVTGNAPGNDIRYIPERVEAARNFANKIWNASRFVMMNLDRELMDKYKDCQEYSLADQWILSRTNSLIKEVTENMEKYELGIALQKVHDFLWTEFCDYYIELVKPVLYGDDEKAKGVVFNVLYTVLNTGLKLLHPVMPFITEEIYTHLSTETESITIATWPTYDEALNNEKAEKDMTFIMEAIRSLRNLRAEMNVPPSRKAKVMAYASEEAKDAFINGGAYLEKLASASEVTFLDNKDNLDNNLVSVVVKGGELFLPLLDLVDREKELERLNKEKTKLEGEILRVEKKLSNERFVSKAPEAVVNEERAKGVKYKEMLEAVLERIEALQ</sequence>
<protein>
    <recommendedName>
        <fullName evidence="1">Valine--tRNA ligase</fullName>
        <ecNumber evidence="1">6.1.1.9</ecNumber>
    </recommendedName>
    <alternativeName>
        <fullName evidence="1">Valyl-tRNA synthetase</fullName>
        <shortName evidence="1">ValRS</shortName>
    </alternativeName>
</protein>
<evidence type="ECO:0000255" key="1">
    <source>
        <dbReference type="HAMAP-Rule" id="MF_02004"/>
    </source>
</evidence>
<reference key="1">
    <citation type="journal article" date="2002" name="Proc. Natl. Acad. Sci. U.S.A.">
        <title>Complete genome sequence of Clostridium perfringens, an anaerobic flesh-eater.</title>
        <authorList>
            <person name="Shimizu T."/>
            <person name="Ohtani K."/>
            <person name="Hirakawa H."/>
            <person name="Ohshima K."/>
            <person name="Yamashita A."/>
            <person name="Shiba T."/>
            <person name="Ogasawara N."/>
            <person name="Hattori M."/>
            <person name="Kuhara S."/>
            <person name="Hayashi H."/>
        </authorList>
    </citation>
    <scope>NUCLEOTIDE SEQUENCE [LARGE SCALE GENOMIC DNA]</scope>
    <source>
        <strain>13 / Type A</strain>
    </source>
</reference>
<proteinExistence type="inferred from homology"/>
<organism>
    <name type="scientific">Clostridium perfringens (strain 13 / Type A)</name>
    <dbReference type="NCBI Taxonomy" id="195102"/>
    <lineage>
        <taxon>Bacteria</taxon>
        <taxon>Bacillati</taxon>
        <taxon>Bacillota</taxon>
        <taxon>Clostridia</taxon>
        <taxon>Eubacteriales</taxon>
        <taxon>Clostridiaceae</taxon>
        <taxon>Clostridium</taxon>
    </lineage>
</organism>